<feature type="peptide" id="PRO_0000437508" description="Cyclotide mela-2" evidence="1 2">
    <location>
        <begin position="1"/>
        <end position="29"/>
    </location>
</feature>
<feature type="disulfide bond" evidence="1">
    <location>
        <begin position="5"/>
        <end position="19"/>
    </location>
</feature>
<feature type="disulfide bond" evidence="1">
    <location>
        <begin position="9"/>
        <end position="21"/>
    </location>
</feature>
<feature type="disulfide bond" evidence="1">
    <location>
        <begin position="14"/>
        <end position="26"/>
    </location>
</feature>
<feature type="cross-link" description="Cyclopeptide (Gly-Asp)" evidence="5">
    <location>
        <begin position="1"/>
        <end position="29"/>
    </location>
</feature>
<reference evidence="4" key="1">
    <citation type="journal article" date="2015" name="ACS Chem. Biol.">
        <title>Lysine-rich cyclotides: a new subclass of circular knotted proteins from Violaceae.</title>
        <authorList>
            <person name="Ravipati A.S."/>
            <person name="Henriques S.T."/>
            <person name="Poth A.G."/>
            <person name="Kaas Q."/>
            <person name="Wang C.K."/>
            <person name="Colgrave M.L."/>
            <person name="Craik D.J."/>
        </authorList>
    </citation>
    <scope>PROTEIN SEQUENCE</scope>
    <scope>FUNCTION</scope>
    <scope>MASS SPECTROMETRY</scope>
    <scope>IDENTIFICATION BY MASS SPECTROMETRY</scope>
    <scope>PRESENCE OF DISULFIDE BONDS</scope>
    <scope>CYCLIZATION</scope>
    <scope>STRUCTURE BY NMR</scope>
</reference>
<organism evidence="3">
    <name type="scientific">Melicytus latifolius</name>
    <name type="common">Norfolk Island mahoe</name>
    <name type="synonym">Hymenanthera latifolia</name>
    <dbReference type="NCBI Taxonomy" id="212268"/>
    <lineage>
        <taxon>Eukaryota</taxon>
        <taxon>Viridiplantae</taxon>
        <taxon>Streptophyta</taxon>
        <taxon>Embryophyta</taxon>
        <taxon>Tracheophyta</taxon>
        <taxon>Spermatophyta</taxon>
        <taxon>Magnoliopsida</taxon>
        <taxon>eudicotyledons</taxon>
        <taxon>Gunneridae</taxon>
        <taxon>Pentapetalae</taxon>
        <taxon>rosids</taxon>
        <taxon>fabids</taxon>
        <taxon>Malpighiales</taxon>
        <taxon>Violaceae</taxon>
        <taxon>Melicytus</taxon>
    </lineage>
</organism>
<evidence type="ECO:0000255" key="1">
    <source>
        <dbReference type="PROSITE-ProRule" id="PRU00395"/>
    </source>
</evidence>
<evidence type="ECO:0000269" key="2">
    <source>
    </source>
</evidence>
<evidence type="ECO:0000303" key="3">
    <source>
    </source>
</evidence>
<evidence type="ECO:0000305" key="4"/>
<evidence type="ECO:0000305" key="5">
    <source>
    </source>
</evidence>
<sequence length="29" mass="3120">GKPTCGETCFKGKCYTPGCTCSYPLCKKD</sequence>
<accession>C0HK29</accession>
<name>CYML2_MELLF</name>
<keyword id="KW-0204">Cytolysis</keyword>
<keyword id="KW-0903">Direct protein sequencing</keyword>
<keyword id="KW-1015">Disulfide bond</keyword>
<keyword id="KW-0960">Knottin</keyword>
<keyword id="KW-0611">Plant defense</keyword>
<dbReference type="SMR" id="C0HK29"/>
<dbReference type="TCDB" id="8.B.33.1.1">
    <property type="family name" value="the trpa1-activating peptide, tx ueg-12-1 (tx-ueg) family"/>
</dbReference>
<dbReference type="GO" id="GO:0006952">
    <property type="term" value="P:defense response"/>
    <property type="evidence" value="ECO:0007669"/>
    <property type="project" value="UniProtKB-KW"/>
</dbReference>
<dbReference type="GO" id="GO:0031640">
    <property type="term" value="P:killing of cells of another organism"/>
    <property type="evidence" value="ECO:0007669"/>
    <property type="project" value="UniProtKB-KW"/>
</dbReference>
<dbReference type="InterPro" id="IPR005535">
    <property type="entry name" value="Cyclotide"/>
</dbReference>
<dbReference type="InterPro" id="IPR036146">
    <property type="entry name" value="Cyclotide_sf"/>
</dbReference>
<dbReference type="Pfam" id="PF03784">
    <property type="entry name" value="Cyclotide"/>
    <property type="match status" value="1"/>
</dbReference>
<dbReference type="SUPFAM" id="SSF57038">
    <property type="entry name" value="Cyclotides"/>
    <property type="match status" value="1"/>
</dbReference>
<dbReference type="PROSITE" id="PS51052">
    <property type="entry name" value="CYCLOTIDE"/>
    <property type="match status" value="1"/>
</dbReference>
<proteinExistence type="evidence at protein level"/>
<protein>
    <recommendedName>
        <fullName evidence="3">Cyclotide mela-2</fullName>
    </recommendedName>
</protein>
<comment type="function">
    <text evidence="1 2">Probably participates in a plant defense mechanism (Potential). Binds to and induces leakage in phospholipd membranes, particularly ones containing 1-palmitoyl-2-oleophosphatidylethanolamine (POPE) (PubMed:26322745). In vitro, displays cytotoxicity against cultured cells but no hemolytic activity towards fresh erythrocytes (PubMed:26322745). Not active against Gram-negative bacterium E.coli ATCC 25922 or Gram-positive bacterium S.aureus ATCC 25923 up to a concentration of 64 uM (PubMed:26322745).</text>
</comment>
<comment type="domain">
    <text evidence="4">The presence of a 'disulfide through disulfide knot' structurally defines this protein as a knottin.</text>
</comment>
<comment type="PTM">
    <text evidence="1 2">This is a cyclic peptide.</text>
</comment>
<comment type="PTM">
    <text evidence="2">Contains 3 disulfide bonds.</text>
</comment>
<comment type="mass spectrometry" mass="3093.3" method="Electrospray" evidence="2"/>
<comment type="similarity">
    <text evidence="3">Belongs to the cyclotide family. Moebuis subfamily.</text>
</comment>
<comment type="caution">
    <text evidence="1">This peptide is cyclic. The start position was chosen by similarity to Oak1 (kalata B1) for which the DNA sequence is known.</text>
</comment>